<gene>
    <name evidence="1" type="primary">leuA</name>
    <name type="ordered locus">P9515_11561</name>
</gene>
<sequence>MSKDPGRILIFDTTLRDGEQSPGASLNLEEKLAIAHQLARLGVDVIEAGFPFASPGDFKAVNKISEVVGGENGPIICGLARASTSDIKACYEAIIPAPKKRIHTFIATSDIHLKHKLRKSRKDVLSIVPEMVSYAKSLVDDIEFSCEDASRSDPEFLYEVIQLAITSGATTINIPDTVGFTTPSEFGKLIFDINKNVPNIDEAVISVHGHNDLGLAVANFLEAAKNGARQLECTINGIGERAGNASLEELVMALHVRKSFFNSFFGRSSDSPTPLTAIRTEEITKTSRLVSNLTGMNVQPNKAIVGANAFAHESGIHQDGVLKNRLTYEIIDAKTVGLNDNKISLGKLSGRSAVRARLEEMGYDLSREDLNDAFARFKDLADRKREITDRDLEAIVSEQVQLPESRFQLSHVQVSCGSTSKPTATVTILNTETHTEDTSVAIGTGPVDAVCEAINELAKVPNELIEFSVKSVTEGIDALGEVTIRIRNKNKIYSGHSADTDVVVAAANAFLNALNRLIFSEKKECIHPQFDNLENSEKKVFSNPKN</sequence>
<evidence type="ECO:0000255" key="1">
    <source>
        <dbReference type="HAMAP-Rule" id="MF_01025"/>
    </source>
</evidence>
<keyword id="KW-0028">Amino-acid biosynthesis</keyword>
<keyword id="KW-0100">Branched-chain amino acid biosynthesis</keyword>
<keyword id="KW-0963">Cytoplasm</keyword>
<keyword id="KW-0432">Leucine biosynthesis</keyword>
<keyword id="KW-0464">Manganese</keyword>
<keyword id="KW-0479">Metal-binding</keyword>
<keyword id="KW-0808">Transferase</keyword>
<reference key="1">
    <citation type="journal article" date="2007" name="PLoS Genet.">
        <title>Patterns and implications of gene gain and loss in the evolution of Prochlorococcus.</title>
        <authorList>
            <person name="Kettler G.C."/>
            <person name="Martiny A.C."/>
            <person name="Huang K."/>
            <person name="Zucker J."/>
            <person name="Coleman M.L."/>
            <person name="Rodrigue S."/>
            <person name="Chen F."/>
            <person name="Lapidus A."/>
            <person name="Ferriera S."/>
            <person name="Johnson J."/>
            <person name="Steglich C."/>
            <person name="Church G.M."/>
            <person name="Richardson P."/>
            <person name="Chisholm S.W."/>
        </authorList>
    </citation>
    <scope>NUCLEOTIDE SEQUENCE [LARGE SCALE GENOMIC DNA]</scope>
    <source>
        <strain>MIT 9515</strain>
    </source>
</reference>
<dbReference type="EC" id="2.3.3.13" evidence="1"/>
<dbReference type="EMBL" id="CP000552">
    <property type="protein sequence ID" value="ABM72363.1"/>
    <property type="molecule type" value="Genomic_DNA"/>
</dbReference>
<dbReference type="RefSeq" id="WP_011820463.1">
    <property type="nucleotide sequence ID" value="NC_008817.1"/>
</dbReference>
<dbReference type="SMR" id="A2BX52"/>
<dbReference type="STRING" id="167542.P9515_11561"/>
<dbReference type="GeneID" id="60201840"/>
<dbReference type="KEGG" id="pmc:P9515_11561"/>
<dbReference type="eggNOG" id="COG0119">
    <property type="taxonomic scope" value="Bacteria"/>
</dbReference>
<dbReference type="HOGENOM" id="CLU_022158_0_1_3"/>
<dbReference type="OrthoDB" id="9804858at2"/>
<dbReference type="UniPathway" id="UPA00048">
    <property type="reaction ID" value="UER00070"/>
</dbReference>
<dbReference type="Proteomes" id="UP000001589">
    <property type="component" value="Chromosome"/>
</dbReference>
<dbReference type="GO" id="GO:0005737">
    <property type="term" value="C:cytoplasm"/>
    <property type="evidence" value="ECO:0007669"/>
    <property type="project" value="UniProtKB-SubCell"/>
</dbReference>
<dbReference type="GO" id="GO:0003852">
    <property type="term" value="F:2-isopropylmalate synthase activity"/>
    <property type="evidence" value="ECO:0007669"/>
    <property type="project" value="UniProtKB-UniRule"/>
</dbReference>
<dbReference type="GO" id="GO:0003985">
    <property type="term" value="F:acetyl-CoA C-acetyltransferase activity"/>
    <property type="evidence" value="ECO:0007669"/>
    <property type="project" value="UniProtKB-UniRule"/>
</dbReference>
<dbReference type="GO" id="GO:0030145">
    <property type="term" value="F:manganese ion binding"/>
    <property type="evidence" value="ECO:0007669"/>
    <property type="project" value="UniProtKB-UniRule"/>
</dbReference>
<dbReference type="GO" id="GO:0009098">
    <property type="term" value="P:L-leucine biosynthetic process"/>
    <property type="evidence" value="ECO:0007669"/>
    <property type="project" value="UniProtKB-UniRule"/>
</dbReference>
<dbReference type="CDD" id="cd07940">
    <property type="entry name" value="DRE_TIM_IPMS"/>
    <property type="match status" value="1"/>
</dbReference>
<dbReference type="FunFam" id="1.10.238.260:FF:000001">
    <property type="entry name" value="2-isopropylmalate synthase"/>
    <property type="match status" value="1"/>
</dbReference>
<dbReference type="FunFam" id="3.20.20.70:FF:000010">
    <property type="entry name" value="2-isopropylmalate synthase"/>
    <property type="match status" value="1"/>
</dbReference>
<dbReference type="Gene3D" id="1.10.238.260">
    <property type="match status" value="1"/>
</dbReference>
<dbReference type="Gene3D" id="3.30.160.270">
    <property type="match status" value="1"/>
</dbReference>
<dbReference type="Gene3D" id="3.20.20.70">
    <property type="entry name" value="Aldolase class I"/>
    <property type="match status" value="1"/>
</dbReference>
<dbReference type="HAMAP" id="MF_01025">
    <property type="entry name" value="LeuA_type1"/>
    <property type="match status" value="1"/>
</dbReference>
<dbReference type="InterPro" id="IPR050073">
    <property type="entry name" value="2-IPM_HCS-like"/>
</dbReference>
<dbReference type="InterPro" id="IPR013709">
    <property type="entry name" value="2-isopropylmalate_synth_dimer"/>
</dbReference>
<dbReference type="InterPro" id="IPR002034">
    <property type="entry name" value="AIPM/Hcit_synth_CS"/>
</dbReference>
<dbReference type="InterPro" id="IPR013785">
    <property type="entry name" value="Aldolase_TIM"/>
</dbReference>
<dbReference type="InterPro" id="IPR054691">
    <property type="entry name" value="LeuA/HCS_post-cat"/>
</dbReference>
<dbReference type="InterPro" id="IPR036230">
    <property type="entry name" value="LeuA_allosteric_dom_sf"/>
</dbReference>
<dbReference type="InterPro" id="IPR005671">
    <property type="entry name" value="LeuA_bact_synth"/>
</dbReference>
<dbReference type="InterPro" id="IPR000891">
    <property type="entry name" value="PYR_CT"/>
</dbReference>
<dbReference type="NCBIfam" id="TIGR00973">
    <property type="entry name" value="leuA_bact"/>
    <property type="match status" value="1"/>
</dbReference>
<dbReference type="NCBIfam" id="NF002086">
    <property type="entry name" value="PRK00915.1-3"/>
    <property type="match status" value="1"/>
</dbReference>
<dbReference type="PANTHER" id="PTHR10277:SF9">
    <property type="entry name" value="2-ISOPROPYLMALATE SYNTHASE 1, CHLOROPLASTIC-RELATED"/>
    <property type="match status" value="1"/>
</dbReference>
<dbReference type="PANTHER" id="PTHR10277">
    <property type="entry name" value="HOMOCITRATE SYNTHASE-RELATED"/>
    <property type="match status" value="1"/>
</dbReference>
<dbReference type="Pfam" id="PF22617">
    <property type="entry name" value="HCS_D2"/>
    <property type="match status" value="1"/>
</dbReference>
<dbReference type="Pfam" id="PF00682">
    <property type="entry name" value="HMGL-like"/>
    <property type="match status" value="1"/>
</dbReference>
<dbReference type="Pfam" id="PF08502">
    <property type="entry name" value="LeuA_dimer"/>
    <property type="match status" value="1"/>
</dbReference>
<dbReference type="SMART" id="SM00917">
    <property type="entry name" value="LeuA_dimer"/>
    <property type="match status" value="1"/>
</dbReference>
<dbReference type="SUPFAM" id="SSF110921">
    <property type="entry name" value="2-isopropylmalate synthase LeuA, allosteric (dimerisation) domain"/>
    <property type="match status" value="1"/>
</dbReference>
<dbReference type="SUPFAM" id="SSF51569">
    <property type="entry name" value="Aldolase"/>
    <property type="match status" value="1"/>
</dbReference>
<dbReference type="PROSITE" id="PS00815">
    <property type="entry name" value="AIPM_HOMOCIT_SYNTH_1"/>
    <property type="match status" value="1"/>
</dbReference>
<dbReference type="PROSITE" id="PS00816">
    <property type="entry name" value="AIPM_HOMOCIT_SYNTH_2"/>
    <property type="match status" value="1"/>
</dbReference>
<dbReference type="PROSITE" id="PS50991">
    <property type="entry name" value="PYR_CT"/>
    <property type="match status" value="1"/>
</dbReference>
<protein>
    <recommendedName>
        <fullName evidence="1">2-isopropylmalate synthase</fullName>
        <ecNumber evidence="1">2.3.3.13</ecNumber>
    </recommendedName>
    <alternativeName>
        <fullName evidence="1">Alpha-IPM synthase</fullName>
    </alternativeName>
    <alternativeName>
        <fullName evidence="1">Alpha-isopropylmalate synthase</fullName>
    </alternativeName>
</protein>
<organism>
    <name type="scientific">Prochlorococcus marinus (strain MIT 9515)</name>
    <dbReference type="NCBI Taxonomy" id="167542"/>
    <lineage>
        <taxon>Bacteria</taxon>
        <taxon>Bacillati</taxon>
        <taxon>Cyanobacteriota</taxon>
        <taxon>Cyanophyceae</taxon>
        <taxon>Synechococcales</taxon>
        <taxon>Prochlorococcaceae</taxon>
        <taxon>Prochlorococcus</taxon>
    </lineage>
</organism>
<proteinExistence type="inferred from homology"/>
<comment type="function">
    <text evidence="1">Catalyzes the condensation of the acetyl group of acetyl-CoA with 3-methyl-2-oxobutanoate (2-ketoisovalerate) to form 3-carboxy-3-hydroxy-4-methylpentanoate (2-isopropylmalate).</text>
</comment>
<comment type="catalytic activity">
    <reaction evidence="1">
        <text>3-methyl-2-oxobutanoate + acetyl-CoA + H2O = (2S)-2-isopropylmalate + CoA + H(+)</text>
        <dbReference type="Rhea" id="RHEA:21524"/>
        <dbReference type="ChEBI" id="CHEBI:1178"/>
        <dbReference type="ChEBI" id="CHEBI:11851"/>
        <dbReference type="ChEBI" id="CHEBI:15377"/>
        <dbReference type="ChEBI" id="CHEBI:15378"/>
        <dbReference type="ChEBI" id="CHEBI:57287"/>
        <dbReference type="ChEBI" id="CHEBI:57288"/>
        <dbReference type="EC" id="2.3.3.13"/>
    </reaction>
</comment>
<comment type="cofactor">
    <cofactor evidence="1">
        <name>Mn(2+)</name>
        <dbReference type="ChEBI" id="CHEBI:29035"/>
    </cofactor>
</comment>
<comment type="pathway">
    <text evidence="1">Amino-acid biosynthesis; L-leucine biosynthesis; L-leucine from 3-methyl-2-oxobutanoate: step 1/4.</text>
</comment>
<comment type="subunit">
    <text evidence="1">Homodimer.</text>
</comment>
<comment type="subcellular location">
    <subcellularLocation>
        <location evidence="1">Cytoplasm</location>
    </subcellularLocation>
</comment>
<comment type="similarity">
    <text evidence="1">Belongs to the alpha-IPM synthase/homocitrate synthase family. LeuA type 1 subfamily.</text>
</comment>
<name>LEU1_PROM5</name>
<feature type="chain" id="PRO_1000149245" description="2-isopropylmalate synthase">
    <location>
        <begin position="1"/>
        <end position="546"/>
    </location>
</feature>
<feature type="domain" description="Pyruvate carboxyltransferase" evidence="1">
    <location>
        <begin position="8"/>
        <end position="271"/>
    </location>
</feature>
<feature type="region of interest" description="Regulatory domain" evidence="1">
    <location>
        <begin position="408"/>
        <end position="546"/>
    </location>
</feature>
<feature type="binding site" evidence="1">
    <location>
        <position position="17"/>
    </location>
    <ligand>
        <name>Mn(2+)</name>
        <dbReference type="ChEBI" id="CHEBI:29035"/>
    </ligand>
</feature>
<feature type="binding site" evidence="1">
    <location>
        <position position="208"/>
    </location>
    <ligand>
        <name>Mn(2+)</name>
        <dbReference type="ChEBI" id="CHEBI:29035"/>
    </ligand>
</feature>
<feature type="binding site" evidence="1">
    <location>
        <position position="210"/>
    </location>
    <ligand>
        <name>Mn(2+)</name>
        <dbReference type="ChEBI" id="CHEBI:29035"/>
    </ligand>
</feature>
<feature type="binding site" evidence="1">
    <location>
        <position position="244"/>
    </location>
    <ligand>
        <name>Mn(2+)</name>
        <dbReference type="ChEBI" id="CHEBI:29035"/>
    </ligand>
</feature>
<accession>A2BX52</accession>